<keyword id="KW-1185">Reference proteome</keyword>
<keyword id="KW-0687">Ribonucleoprotein</keyword>
<keyword id="KW-0689">Ribosomal protein</keyword>
<keyword id="KW-0694">RNA-binding</keyword>
<keyword id="KW-0699">rRNA-binding</keyword>
<organism>
    <name type="scientific">Photorhabdus laumondii subsp. laumondii (strain DSM 15139 / CIP 105565 / TT01)</name>
    <name type="common">Photorhabdus luminescens subsp. laumondii</name>
    <dbReference type="NCBI Taxonomy" id="243265"/>
    <lineage>
        <taxon>Bacteria</taxon>
        <taxon>Pseudomonadati</taxon>
        <taxon>Pseudomonadota</taxon>
        <taxon>Gammaproteobacteria</taxon>
        <taxon>Enterobacterales</taxon>
        <taxon>Morganellaceae</taxon>
        <taxon>Photorhabdus</taxon>
    </lineage>
</organism>
<sequence length="166" mass="17543">MAHIEKQAGELQEKLIAVNRVSKTVKGGRIFSFTALTVVGDGNGRVGFGYGKAREVPAAIQKAMEKARRNMKTVALNSGTLYHPVKGAHTGSRVFMQPAHEGTGIIAGGAMRAVLEVAGVRNVLAKTYGSTNPINVVRATLDALDSMKSPEMVAAKRGKSVEEILG</sequence>
<comment type="function">
    <text evidence="1">With S4 and S12 plays an important role in translational accuracy.</text>
</comment>
<comment type="function">
    <text evidence="1">Located at the back of the 30S subunit body where it stabilizes the conformation of the head with respect to the body.</text>
</comment>
<comment type="subunit">
    <text evidence="1">Part of the 30S ribosomal subunit. Contacts proteins S4 and S8.</text>
</comment>
<comment type="domain">
    <text>The N-terminal domain interacts with the head of the 30S subunit; the C-terminal domain interacts with the body and contacts protein S4. The interaction surface between S4 and S5 is involved in control of translational fidelity.</text>
</comment>
<comment type="similarity">
    <text evidence="1">Belongs to the universal ribosomal protein uS5 family.</text>
</comment>
<gene>
    <name evidence="1" type="primary">rpsE</name>
    <name type="ordered locus">plu4709</name>
</gene>
<protein>
    <recommendedName>
        <fullName evidence="1">Small ribosomal subunit protein uS5</fullName>
    </recommendedName>
    <alternativeName>
        <fullName evidence="2">30S ribosomal protein S5</fullName>
    </alternativeName>
</protein>
<accession>Q7MYG8</accession>
<name>RS5_PHOLL</name>
<proteinExistence type="inferred from homology"/>
<reference key="1">
    <citation type="journal article" date="2003" name="Nat. Biotechnol.">
        <title>The genome sequence of the entomopathogenic bacterium Photorhabdus luminescens.</title>
        <authorList>
            <person name="Duchaud E."/>
            <person name="Rusniok C."/>
            <person name="Frangeul L."/>
            <person name="Buchrieser C."/>
            <person name="Givaudan A."/>
            <person name="Taourit S."/>
            <person name="Bocs S."/>
            <person name="Boursaux-Eude C."/>
            <person name="Chandler M."/>
            <person name="Charles J.-F."/>
            <person name="Dassa E."/>
            <person name="Derose R."/>
            <person name="Derzelle S."/>
            <person name="Freyssinet G."/>
            <person name="Gaudriault S."/>
            <person name="Medigue C."/>
            <person name="Lanois A."/>
            <person name="Powell K."/>
            <person name="Siguier P."/>
            <person name="Vincent R."/>
            <person name="Wingate V."/>
            <person name="Zouine M."/>
            <person name="Glaser P."/>
            <person name="Boemare N."/>
            <person name="Danchin A."/>
            <person name="Kunst F."/>
        </authorList>
    </citation>
    <scope>NUCLEOTIDE SEQUENCE [LARGE SCALE GENOMIC DNA]</scope>
    <source>
        <strain>DSM 15139 / CIP 105565 / TT01</strain>
    </source>
</reference>
<feature type="chain" id="PRO_0000131567" description="Small ribosomal subunit protein uS5">
    <location>
        <begin position="1"/>
        <end position="166"/>
    </location>
</feature>
<feature type="domain" description="S5 DRBM" evidence="1">
    <location>
        <begin position="11"/>
        <end position="74"/>
    </location>
</feature>
<evidence type="ECO:0000255" key="1">
    <source>
        <dbReference type="HAMAP-Rule" id="MF_01307"/>
    </source>
</evidence>
<evidence type="ECO:0000305" key="2"/>
<dbReference type="EMBL" id="BX571874">
    <property type="protein sequence ID" value="CAE17081.1"/>
    <property type="molecule type" value="Genomic_DNA"/>
</dbReference>
<dbReference type="RefSeq" id="WP_011148778.1">
    <property type="nucleotide sequence ID" value="NC_005126.1"/>
</dbReference>
<dbReference type="SMR" id="Q7MYG8"/>
<dbReference type="STRING" id="243265.plu4709"/>
<dbReference type="GeneID" id="45657750"/>
<dbReference type="GeneID" id="48850934"/>
<dbReference type="KEGG" id="plu:plu4709"/>
<dbReference type="eggNOG" id="COG0098">
    <property type="taxonomic scope" value="Bacteria"/>
</dbReference>
<dbReference type="HOGENOM" id="CLU_065898_2_2_6"/>
<dbReference type="OrthoDB" id="9809045at2"/>
<dbReference type="Proteomes" id="UP000002514">
    <property type="component" value="Chromosome"/>
</dbReference>
<dbReference type="GO" id="GO:0015935">
    <property type="term" value="C:small ribosomal subunit"/>
    <property type="evidence" value="ECO:0007669"/>
    <property type="project" value="InterPro"/>
</dbReference>
<dbReference type="GO" id="GO:0019843">
    <property type="term" value="F:rRNA binding"/>
    <property type="evidence" value="ECO:0007669"/>
    <property type="project" value="UniProtKB-UniRule"/>
</dbReference>
<dbReference type="GO" id="GO:0003735">
    <property type="term" value="F:structural constituent of ribosome"/>
    <property type="evidence" value="ECO:0007669"/>
    <property type="project" value="InterPro"/>
</dbReference>
<dbReference type="GO" id="GO:0006412">
    <property type="term" value="P:translation"/>
    <property type="evidence" value="ECO:0007669"/>
    <property type="project" value="UniProtKB-UniRule"/>
</dbReference>
<dbReference type="FunFam" id="3.30.160.20:FF:000001">
    <property type="entry name" value="30S ribosomal protein S5"/>
    <property type="match status" value="1"/>
</dbReference>
<dbReference type="FunFam" id="3.30.230.10:FF:000002">
    <property type="entry name" value="30S ribosomal protein S5"/>
    <property type="match status" value="1"/>
</dbReference>
<dbReference type="Gene3D" id="3.30.160.20">
    <property type="match status" value="1"/>
</dbReference>
<dbReference type="Gene3D" id="3.30.230.10">
    <property type="match status" value="1"/>
</dbReference>
<dbReference type="HAMAP" id="MF_01307_B">
    <property type="entry name" value="Ribosomal_uS5_B"/>
    <property type="match status" value="1"/>
</dbReference>
<dbReference type="InterPro" id="IPR020568">
    <property type="entry name" value="Ribosomal_Su5_D2-typ_SF"/>
</dbReference>
<dbReference type="InterPro" id="IPR000851">
    <property type="entry name" value="Ribosomal_uS5"/>
</dbReference>
<dbReference type="InterPro" id="IPR005712">
    <property type="entry name" value="Ribosomal_uS5_bac-type"/>
</dbReference>
<dbReference type="InterPro" id="IPR005324">
    <property type="entry name" value="Ribosomal_uS5_C"/>
</dbReference>
<dbReference type="InterPro" id="IPR013810">
    <property type="entry name" value="Ribosomal_uS5_N"/>
</dbReference>
<dbReference type="InterPro" id="IPR018192">
    <property type="entry name" value="Ribosomal_uS5_N_CS"/>
</dbReference>
<dbReference type="InterPro" id="IPR014721">
    <property type="entry name" value="Ribsml_uS5_D2-typ_fold_subgr"/>
</dbReference>
<dbReference type="NCBIfam" id="TIGR01021">
    <property type="entry name" value="rpsE_bact"/>
    <property type="match status" value="1"/>
</dbReference>
<dbReference type="PANTHER" id="PTHR48277">
    <property type="entry name" value="MITOCHONDRIAL RIBOSOMAL PROTEIN S5"/>
    <property type="match status" value="1"/>
</dbReference>
<dbReference type="PANTHER" id="PTHR48277:SF1">
    <property type="entry name" value="MITOCHONDRIAL RIBOSOMAL PROTEIN S5"/>
    <property type="match status" value="1"/>
</dbReference>
<dbReference type="Pfam" id="PF00333">
    <property type="entry name" value="Ribosomal_S5"/>
    <property type="match status" value="1"/>
</dbReference>
<dbReference type="Pfam" id="PF03719">
    <property type="entry name" value="Ribosomal_S5_C"/>
    <property type="match status" value="1"/>
</dbReference>
<dbReference type="SUPFAM" id="SSF54768">
    <property type="entry name" value="dsRNA-binding domain-like"/>
    <property type="match status" value="1"/>
</dbReference>
<dbReference type="SUPFAM" id="SSF54211">
    <property type="entry name" value="Ribosomal protein S5 domain 2-like"/>
    <property type="match status" value="1"/>
</dbReference>
<dbReference type="PROSITE" id="PS00585">
    <property type="entry name" value="RIBOSOMAL_S5"/>
    <property type="match status" value="1"/>
</dbReference>
<dbReference type="PROSITE" id="PS50881">
    <property type="entry name" value="S5_DSRBD"/>
    <property type="match status" value="1"/>
</dbReference>